<accession>Q8E779</accession>
<keyword id="KW-0131">Cell cycle</keyword>
<keyword id="KW-0132">Cell division</keyword>
<keyword id="KW-1003">Cell membrane</keyword>
<keyword id="KW-0133">Cell shape</keyword>
<keyword id="KW-0961">Cell wall biogenesis/degradation</keyword>
<keyword id="KW-0460">Magnesium</keyword>
<keyword id="KW-0472">Membrane</keyword>
<keyword id="KW-0479">Metal-binding</keyword>
<keyword id="KW-0573">Peptidoglycan synthesis</keyword>
<keyword id="KW-0808">Transferase</keyword>
<keyword id="KW-0812">Transmembrane</keyword>
<keyword id="KW-1133">Transmembrane helix</keyword>
<reference key="1">
    <citation type="journal article" date="2002" name="Mol. Microbiol.">
        <title>Genome sequence of Streptococcus agalactiae, a pathogen causing invasive neonatal disease.</title>
        <authorList>
            <person name="Glaser P."/>
            <person name="Rusniok C."/>
            <person name="Buchrieser C."/>
            <person name="Chevalier F."/>
            <person name="Frangeul L."/>
            <person name="Msadek T."/>
            <person name="Zouine M."/>
            <person name="Couve E."/>
            <person name="Lalioui L."/>
            <person name="Poyart C."/>
            <person name="Trieu-Cuot P."/>
            <person name="Kunst F."/>
        </authorList>
    </citation>
    <scope>NUCLEOTIDE SEQUENCE [LARGE SCALE GENOMIC DNA]</scope>
    <source>
        <strain>NEM316</strain>
    </source>
</reference>
<protein>
    <recommendedName>
        <fullName evidence="1">Phospho-N-acetylmuramoyl-pentapeptide-transferase</fullName>
        <ecNumber evidence="1">2.7.8.13</ecNumber>
    </recommendedName>
    <alternativeName>
        <fullName evidence="1">UDP-MurNAc-pentapeptide phosphotransferase</fullName>
    </alternativeName>
</protein>
<dbReference type="EC" id="2.7.8.13" evidence="1"/>
<dbReference type="EMBL" id="AL766844">
    <property type="protein sequence ID" value="CAD45923.1"/>
    <property type="molecule type" value="Genomic_DNA"/>
</dbReference>
<dbReference type="RefSeq" id="WP_000480020.1">
    <property type="nucleotide sequence ID" value="NC_004368.1"/>
</dbReference>
<dbReference type="SMR" id="Q8E779"/>
<dbReference type="KEGG" id="san:mraY"/>
<dbReference type="eggNOG" id="COG0472">
    <property type="taxonomic scope" value="Bacteria"/>
</dbReference>
<dbReference type="HOGENOM" id="CLU_023982_0_1_9"/>
<dbReference type="UniPathway" id="UPA00219"/>
<dbReference type="Proteomes" id="UP000000823">
    <property type="component" value="Chromosome"/>
</dbReference>
<dbReference type="GO" id="GO:0005886">
    <property type="term" value="C:plasma membrane"/>
    <property type="evidence" value="ECO:0007669"/>
    <property type="project" value="UniProtKB-SubCell"/>
</dbReference>
<dbReference type="GO" id="GO:0046872">
    <property type="term" value="F:metal ion binding"/>
    <property type="evidence" value="ECO:0007669"/>
    <property type="project" value="UniProtKB-KW"/>
</dbReference>
<dbReference type="GO" id="GO:0008963">
    <property type="term" value="F:phospho-N-acetylmuramoyl-pentapeptide-transferase activity"/>
    <property type="evidence" value="ECO:0007669"/>
    <property type="project" value="UniProtKB-UniRule"/>
</dbReference>
<dbReference type="GO" id="GO:0051301">
    <property type="term" value="P:cell division"/>
    <property type="evidence" value="ECO:0007669"/>
    <property type="project" value="UniProtKB-KW"/>
</dbReference>
<dbReference type="GO" id="GO:0071555">
    <property type="term" value="P:cell wall organization"/>
    <property type="evidence" value="ECO:0007669"/>
    <property type="project" value="UniProtKB-KW"/>
</dbReference>
<dbReference type="GO" id="GO:0009252">
    <property type="term" value="P:peptidoglycan biosynthetic process"/>
    <property type="evidence" value="ECO:0007669"/>
    <property type="project" value="UniProtKB-UniRule"/>
</dbReference>
<dbReference type="GO" id="GO:0008360">
    <property type="term" value="P:regulation of cell shape"/>
    <property type="evidence" value="ECO:0007669"/>
    <property type="project" value="UniProtKB-KW"/>
</dbReference>
<dbReference type="CDD" id="cd06852">
    <property type="entry name" value="GT_MraY"/>
    <property type="match status" value="1"/>
</dbReference>
<dbReference type="HAMAP" id="MF_00038">
    <property type="entry name" value="MraY"/>
    <property type="match status" value="1"/>
</dbReference>
<dbReference type="InterPro" id="IPR000715">
    <property type="entry name" value="Glycosyl_transferase_4"/>
</dbReference>
<dbReference type="InterPro" id="IPR003524">
    <property type="entry name" value="PNAcMuramoyl-5peptid_Trfase"/>
</dbReference>
<dbReference type="InterPro" id="IPR018480">
    <property type="entry name" value="PNAcMuramoyl-5peptid_Trfase_CS"/>
</dbReference>
<dbReference type="NCBIfam" id="TIGR00445">
    <property type="entry name" value="mraY"/>
    <property type="match status" value="1"/>
</dbReference>
<dbReference type="PANTHER" id="PTHR22926">
    <property type="entry name" value="PHOSPHO-N-ACETYLMURAMOYL-PENTAPEPTIDE-TRANSFERASE"/>
    <property type="match status" value="1"/>
</dbReference>
<dbReference type="PANTHER" id="PTHR22926:SF5">
    <property type="entry name" value="PHOSPHO-N-ACETYLMURAMOYL-PENTAPEPTIDE-TRANSFERASE HOMOLOG"/>
    <property type="match status" value="1"/>
</dbReference>
<dbReference type="Pfam" id="PF00953">
    <property type="entry name" value="Glycos_transf_4"/>
    <property type="match status" value="1"/>
</dbReference>
<dbReference type="Pfam" id="PF10555">
    <property type="entry name" value="MraY_sig1"/>
    <property type="match status" value="1"/>
</dbReference>
<dbReference type="PROSITE" id="PS01348">
    <property type="entry name" value="MRAY_2"/>
    <property type="match status" value="1"/>
</dbReference>
<evidence type="ECO:0000255" key="1">
    <source>
        <dbReference type="HAMAP-Rule" id="MF_00038"/>
    </source>
</evidence>
<proteinExistence type="inferred from homology"/>
<sequence>MFLSIMAGVIAFVLTVIAIPRFIKFYQLKKIGGQQMHEDVKQHLAKAGTPTMGGTVFLIVALLVSLIFSIILSKENSGNLGATFGILSVVLIYGIIGFLDDFLKIFKQINEGLTPKQKMSLQLIAGLIFYFVHVLPSGTSAINIFGFYLEVGYLYAFFVLFWVVGFSNAVNLTDGIDGLASISVVISLITYGIIAYNQTQFDILLIIVIMIGALLGFFVFNHKPAKVFMGDVGSLALGAMLAAISIALRQEWTLLFIGFVYVFETSSVMLQVAYFKYTKKKTGVGKRIFRMTPFHHHLELGGVSGKGNKWSEWKVDAFLWAIGIFMSAITLAILYL</sequence>
<gene>
    <name evidence="1" type="primary">mraY</name>
    <name type="ordered locus">gbs0278</name>
</gene>
<feature type="chain" id="PRO_0000108899" description="Phospho-N-acetylmuramoyl-pentapeptide-transferase">
    <location>
        <begin position="1"/>
        <end position="336"/>
    </location>
</feature>
<feature type="transmembrane region" description="Helical" evidence="1">
    <location>
        <begin position="3"/>
        <end position="23"/>
    </location>
</feature>
<feature type="transmembrane region" description="Helical" evidence="1">
    <location>
        <begin position="52"/>
        <end position="72"/>
    </location>
</feature>
<feature type="transmembrane region" description="Helical" evidence="1">
    <location>
        <begin position="79"/>
        <end position="99"/>
    </location>
</feature>
<feature type="transmembrane region" description="Helical" evidence="1">
    <location>
        <begin position="123"/>
        <end position="143"/>
    </location>
</feature>
<feature type="transmembrane region" description="Helical" evidence="1">
    <location>
        <begin position="144"/>
        <end position="164"/>
    </location>
</feature>
<feature type="transmembrane region" description="Helical" evidence="1">
    <location>
        <begin position="175"/>
        <end position="195"/>
    </location>
</feature>
<feature type="transmembrane region" description="Helical" evidence="1">
    <location>
        <begin position="201"/>
        <end position="221"/>
    </location>
</feature>
<feature type="transmembrane region" description="Helical" evidence="1">
    <location>
        <begin position="227"/>
        <end position="247"/>
    </location>
</feature>
<feature type="transmembrane region" description="Helical" evidence="1">
    <location>
        <begin position="255"/>
        <end position="275"/>
    </location>
</feature>
<feature type="transmembrane region" description="Helical" evidence="1">
    <location>
        <begin position="315"/>
        <end position="335"/>
    </location>
</feature>
<organism>
    <name type="scientific">Streptococcus agalactiae serotype III (strain NEM316)</name>
    <dbReference type="NCBI Taxonomy" id="211110"/>
    <lineage>
        <taxon>Bacteria</taxon>
        <taxon>Bacillati</taxon>
        <taxon>Bacillota</taxon>
        <taxon>Bacilli</taxon>
        <taxon>Lactobacillales</taxon>
        <taxon>Streptococcaceae</taxon>
        <taxon>Streptococcus</taxon>
    </lineage>
</organism>
<name>MRAY_STRA3</name>
<comment type="function">
    <text evidence="1">Catalyzes the initial step of the lipid cycle reactions in the biosynthesis of the cell wall peptidoglycan: transfers peptidoglycan precursor phospho-MurNAc-pentapeptide from UDP-MurNAc-pentapeptide onto the lipid carrier undecaprenyl phosphate, yielding undecaprenyl-pyrophosphoryl-MurNAc-pentapeptide, known as lipid I.</text>
</comment>
<comment type="catalytic activity">
    <reaction evidence="1">
        <text>UDP-N-acetyl-alpha-D-muramoyl-L-alanyl-gamma-D-glutamyl-L-lysyl-D-alanyl-D-alanine + di-trans,octa-cis-undecaprenyl phosphate = Mur2Ac(oyl-L-Ala-gamma-D-Glu-L-Lys-D-Ala-D-Ala)-di-trans,octa-cis-undecaprenyl diphosphate + UMP</text>
        <dbReference type="Rhea" id="RHEA:21920"/>
        <dbReference type="ChEBI" id="CHEBI:57865"/>
        <dbReference type="ChEBI" id="CHEBI:60032"/>
        <dbReference type="ChEBI" id="CHEBI:60392"/>
        <dbReference type="ChEBI" id="CHEBI:70758"/>
        <dbReference type="EC" id="2.7.8.13"/>
    </reaction>
</comment>
<comment type="cofactor">
    <cofactor evidence="1">
        <name>Mg(2+)</name>
        <dbReference type="ChEBI" id="CHEBI:18420"/>
    </cofactor>
</comment>
<comment type="pathway">
    <text evidence="1">Cell wall biogenesis; peptidoglycan biosynthesis.</text>
</comment>
<comment type="subcellular location">
    <subcellularLocation>
        <location evidence="1">Cell membrane</location>
        <topology evidence="1">Multi-pass membrane protein</topology>
    </subcellularLocation>
</comment>
<comment type="similarity">
    <text evidence="1">Belongs to the glycosyltransferase 4 family. MraY subfamily.</text>
</comment>